<reference key="1">
    <citation type="journal article" date="2005" name="Science">
        <title>The transcriptional landscape of the mammalian genome.</title>
        <authorList>
            <person name="Carninci P."/>
            <person name="Kasukawa T."/>
            <person name="Katayama S."/>
            <person name="Gough J."/>
            <person name="Frith M.C."/>
            <person name="Maeda N."/>
            <person name="Oyama R."/>
            <person name="Ravasi T."/>
            <person name="Lenhard B."/>
            <person name="Wells C."/>
            <person name="Kodzius R."/>
            <person name="Shimokawa K."/>
            <person name="Bajic V.B."/>
            <person name="Brenner S.E."/>
            <person name="Batalov S."/>
            <person name="Forrest A.R."/>
            <person name="Zavolan M."/>
            <person name="Davis M.J."/>
            <person name="Wilming L.G."/>
            <person name="Aidinis V."/>
            <person name="Allen J.E."/>
            <person name="Ambesi-Impiombato A."/>
            <person name="Apweiler R."/>
            <person name="Aturaliya R.N."/>
            <person name="Bailey T.L."/>
            <person name="Bansal M."/>
            <person name="Baxter L."/>
            <person name="Beisel K.W."/>
            <person name="Bersano T."/>
            <person name="Bono H."/>
            <person name="Chalk A.M."/>
            <person name="Chiu K.P."/>
            <person name="Choudhary V."/>
            <person name="Christoffels A."/>
            <person name="Clutterbuck D.R."/>
            <person name="Crowe M.L."/>
            <person name="Dalla E."/>
            <person name="Dalrymple B.P."/>
            <person name="de Bono B."/>
            <person name="Della Gatta G."/>
            <person name="di Bernardo D."/>
            <person name="Down T."/>
            <person name="Engstrom P."/>
            <person name="Fagiolini M."/>
            <person name="Faulkner G."/>
            <person name="Fletcher C.F."/>
            <person name="Fukushima T."/>
            <person name="Furuno M."/>
            <person name="Futaki S."/>
            <person name="Gariboldi M."/>
            <person name="Georgii-Hemming P."/>
            <person name="Gingeras T.R."/>
            <person name="Gojobori T."/>
            <person name="Green R.E."/>
            <person name="Gustincich S."/>
            <person name="Harbers M."/>
            <person name="Hayashi Y."/>
            <person name="Hensch T.K."/>
            <person name="Hirokawa N."/>
            <person name="Hill D."/>
            <person name="Huminiecki L."/>
            <person name="Iacono M."/>
            <person name="Ikeo K."/>
            <person name="Iwama A."/>
            <person name="Ishikawa T."/>
            <person name="Jakt M."/>
            <person name="Kanapin A."/>
            <person name="Katoh M."/>
            <person name="Kawasawa Y."/>
            <person name="Kelso J."/>
            <person name="Kitamura H."/>
            <person name="Kitano H."/>
            <person name="Kollias G."/>
            <person name="Krishnan S.P."/>
            <person name="Kruger A."/>
            <person name="Kummerfeld S.K."/>
            <person name="Kurochkin I.V."/>
            <person name="Lareau L.F."/>
            <person name="Lazarevic D."/>
            <person name="Lipovich L."/>
            <person name="Liu J."/>
            <person name="Liuni S."/>
            <person name="McWilliam S."/>
            <person name="Madan Babu M."/>
            <person name="Madera M."/>
            <person name="Marchionni L."/>
            <person name="Matsuda H."/>
            <person name="Matsuzawa S."/>
            <person name="Miki H."/>
            <person name="Mignone F."/>
            <person name="Miyake S."/>
            <person name="Morris K."/>
            <person name="Mottagui-Tabar S."/>
            <person name="Mulder N."/>
            <person name="Nakano N."/>
            <person name="Nakauchi H."/>
            <person name="Ng P."/>
            <person name="Nilsson R."/>
            <person name="Nishiguchi S."/>
            <person name="Nishikawa S."/>
            <person name="Nori F."/>
            <person name="Ohara O."/>
            <person name="Okazaki Y."/>
            <person name="Orlando V."/>
            <person name="Pang K.C."/>
            <person name="Pavan W.J."/>
            <person name="Pavesi G."/>
            <person name="Pesole G."/>
            <person name="Petrovsky N."/>
            <person name="Piazza S."/>
            <person name="Reed J."/>
            <person name="Reid J.F."/>
            <person name="Ring B.Z."/>
            <person name="Ringwald M."/>
            <person name="Rost B."/>
            <person name="Ruan Y."/>
            <person name="Salzberg S.L."/>
            <person name="Sandelin A."/>
            <person name="Schneider C."/>
            <person name="Schoenbach C."/>
            <person name="Sekiguchi K."/>
            <person name="Semple C.A."/>
            <person name="Seno S."/>
            <person name="Sessa L."/>
            <person name="Sheng Y."/>
            <person name="Shibata Y."/>
            <person name="Shimada H."/>
            <person name="Shimada K."/>
            <person name="Silva D."/>
            <person name="Sinclair B."/>
            <person name="Sperling S."/>
            <person name="Stupka E."/>
            <person name="Sugiura K."/>
            <person name="Sultana R."/>
            <person name="Takenaka Y."/>
            <person name="Taki K."/>
            <person name="Tammoja K."/>
            <person name="Tan S.L."/>
            <person name="Tang S."/>
            <person name="Taylor M.S."/>
            <person name="Tegner J."/>
            <person name="Teichmann S.A."/>
            <person name="Ueda H.R."/>
            <person name="van Nimwegen E."/>
            <person name="Verardo R."/>
            <person name="Wei C.L."/>
            <person name="Yagi K."/>
            <person name="Yamanishi H."/>
            <person name="Zabarovsky E."/>
            <person name="Zhu S."/>
            <person name="Zimmer A."/>
            <person name="Hide W."/>
            <person name="Bult C."/>
            <person name="Grimmond S.M."/>
            <person name="Teasdale R.D."/>
            <person name="Liu E.T."/>
            <person name="Brusic V."/>
            <person name="Quackenbush J."/>
            <person name="Wahlestedt C."/>
            <person name="Mattick J.S."/>
            <person name="Hume D.A."/>
            <person name="Kai C."/>
            <person name="Sasaki D."/>
            <person name="Tomaru Y."/>
            <person name="Fukuda S."/>
            <person name="Kanamori-Katayama M."/>
            <person name="Suzuki M."/>
            <person name="Aoki J."/>
            <person name="Arakawa T."/>
            <person name="Iida J."/>
            <person name="Imamura K."/>
            <person name="Itoh M."/>
            <person name="Kato T."/>
            <person name="Kawaji H."/>
            <person name="Kawagashira N."/>
            <person name="Kawashima T."/>
            <person name="Kojima M."/>
            <person name="Kondo S."/>
            <person name="Konno H."/>
            <person name="Nakano K."/>
            <person name="Ninomiya N."/>
            <person name="Nishio T."/>
            <person name="Okada M."/>
            <person name="Plessy C."/>
            <person name="Shibata K."/>
            <person name="Shiraki T."/>
            <person name="Suzuki S."/>
            <person name="Tagami M."/>
            <person name="Waki K."/>
            <person name="Watahiki A."/>
            <person name="Okamura-Oho Y."/>
            <person name="Suzuki H."/>
            <person name="Kawai J."/>
            <person name="Hayashizaki Y."/>
        </authorList>
    </citation>
    <scope>NUCLEOTIDE SEQUENCE [LARGE SCALE MRNA] (ISOFORM 2)</scope>
    <source>
        <strain>C57BL/6J</strain>
        <tissue>Lung</tissue>
    </source>
</reference>
<reference key="2">
    <citation type="journal article" date="2009" name="PLoS Biol.">
        <title>Lineage-specific biology revealed by a finished genome assembly of the mouse.</title>
        <authorList>
            <person name="Church D.M."/>
            <person name="Goodstadt L."/>
            <person name="Hillier L.W."/>
            <person name="Zody M.C."/>
            <person name="Goldstein S."/>
            <person name="She X."/>
            <person name="Bult C.J."/>
            <person name="Agarwala R."/>
            <person name="Cherry J.L."/>
            <person name="DiCuccio M."/>
            <person name="Hlavina W."/>
            <person name="Kapustin Y."/>
            <person name="Meric P."/>
            <person name="Maglott D."/>
            <person name="Birtle Z."/>
            <person name="Marques A.C."/>
            <person name="Graves T."/>
            <person name="Zhou S."/>
            <person name="Teague B."/>
            <person name="Potamousis K."/>
            <person name="Churas C."/>
            <person name="Place M."/>
            <person name="Herschleb J."/>
            <person name="Runnheim R."/>
            <person name="Forrest D."/>
            <person name="Amos-Landgraf J."/>
            <person name="Schwartz D.C."/>
            <person name="Cheng Z."/>
            <person name="Lindblad-Toh K."/>
            <person name="Eichler E.E."/>
            <person name="Ponting C.P."/>
        </authorList>
    </citation>
    <scope>NUCLEOTIDE SEQUENCE [LARGE SCALE GENOMIC DNA]</scope>
    <source>
        <strain>C57BL/6J</strain>
    </source>
</reference>
<reference key="3">
    <citation type="journal article" date="2004" name="Genome Res.">
        <title>The status, quality, and expansion of the NIH full-length cDNA project: the Mammalian Gene Collection (MGC).</title>
        <authorList>
            <consortium name="The MGC Project Team"/>
        </authorList>
    </citation>
    <scope>NUCLEOTIDE SEQUENCE [LARGE SCALE MRNA] (ISOFORM 1)</scope>
    <source>
        <tissue>Embryo</tissue>
    </source>
</reference>
<reference key="4">
    <citation type="journal article" date="2006" name="Mol. Cell. Proteomics">
        <title>Comprehensive identification of phosphorylation sites in postsynaptic density preparations.</title>
        <authorList>
            <person name="Trinidad J.C."/>
            <person name="Specht C.G."/>
            <person name="Thalhammer A."/>
            <person name="Schoepfer R."/>
            <person name="Burlingame A.L."/>
        </authorList>
    </citation>
    <scope>PHOSPHORYLATION [LARGE SCALE ANALYSIS] AT SER-387</scope>
    <scope>IDENTIFICATION BY MASS SPECTROMETRY [LARGE SCALE ANALYSIS]</scope>
    <source>
        <tissue>Brain</tissue>
    </source>
</reference>
<reference key="5">
    <citation type="journal article" date="2007" name="Proc. Natl. Acad. Sci. U.S.A.">
        <title>Large-scale phosphorylation analysis of mouse liver.</title>
        <authorList>
            <person name="Villen J."/>
            <person name="Beausoleil S.A."/>
            <person name="Gerber S.A."/>
            <person name="Gygi S.P."/>
        </authorList>
    </citation>
    <scope>PHOSPHORYLATION [LARGE SCALE ANALYSIS] AT SER-387</scope>
    <scope>IDENTIFICATION BY MASS SPECTROMETRY [LARGE SCALE ANALYSIS]</scope>
    <source>
        <tissue>Liver</tissue>
    </source>
</reference>
<reference key="6">
    <citation type="journal article" date="2009" name="Immunity">
        <title>The phagosomal proteome in interferon-gamma-activated macrophages.</title>
        <authorList>
            <person name="Trost M."/>
            <person name="English L."/>
            <person name="Lemieux S."/>
            <person name="Courcelles M."/>
            <person name="Desjardins M."/>
            <person name="Thibault P."/>
        </authorList>
    </citation>
    <scope>IDENTIFICATION BY MASS SPECTROMETRY [LARGE SCALE ANALYSIS]</scope>
</reference>
<reference key="7">
    <citation type="journal article" date="2010" name="Cell">
        <title>A tissue-specific atlas of mouse protein phosphorylation and expression.</title>
        <authorList>
            <person name="Huttlin E.L."/>
            <person name="Jedrychowski M.P."/>
            <person name="Elias J.E."/>
            <person name="Goswami T."/>
            <person name="Rad R."/>
            <person name="Beausoleil S.A."/>
            <person name="Villen J."/>
            <person name="Haas W."/>
            <person name="Sowa M.E."/>
            <person name="Gygi S.P."/>
        </authorList>
    </citation>
    <scope>PHOSPHORYLATION [LARGE SCALE ANALYSIS] AT SER-222; SER-387 AND SER-415</scope>
    <scope>IDENTIFICATION BY MASS SPECTROMETRY [LARGE SCALE ANALYSIS]</scope>
    <source>
        <tissue>Brain</tissue>
        <tissue>Heart</tissue>
        <tissue>Kidney</tissue>
        <tissue>Lung</tissue>
        <tissue>Pancreas</tissue>
        <tissue>Spleen</tissue>
    </source>
</reference>
<organism>
    <name type="scientific">Mus musculus</name>
    <name type="common">Mouse</name>
    <dbReference type="NCBI Taxonomy" id="10090"/>
    <lineage>
        <taxon>Eukaryota</taxon>
        <taxon>Metazoa</taxon>
        <taxon>Chordata</taxon>
        <taxon>Craniata</taxon>
        <taxon>Vertebrata</taxon>
        <taxon>Euteleostomi</taxon>
        <taxon>Mammalia</taxon>
        <taxon>Eutheria</taxon>
        <taxon>Euarchontoglires</taxon>
        <taxon>Glires</taxon>
        <taxon>Rodentia</taxon>
        <taxon>Myomorpha</taxon>
        <taxon>Muroidea</taxon>
        <taxon>Muridae</taxon>
        <taxon>Murinae</taxon>
        <taxon>Mus</taxon>
        <taxon>Mus</taxon>
    </lineage>
</organism>
<comment type="alternative products">
    <event type="alternative splicing"/>
    <isoform>
        <id>Q7TPM1-1</id>
        <name>1</name>
        <sequence type="displayed"/>
    </isoform>
    <isoform>
        <id>Q7TPM1-2</id>
        <name>2</name>
        <sequence type="described" ref="VSP_022764 VSP_022765"/>
    </isoform>
</comment>
<gene>
    <name type="primary">Prrc2b</name>
    <name type="synonym">Bat2l</name>
    <name type="synonym">Bat2l1</name>
    <name type="synonym">Kiaa0515</name>
</gene>
<feature type="chain" id="PRO_0000274482" description="Protein PRRC2B">
    <location>
        <begin position="1"/>
        <end position="1486"/>
    </location>
</feature>
<feature type="region of interest" description="Disordered" evidence="3">
    <location>
        <begin position="1"/>
        <end position="20"/>
    </location>
</feature>
<feature type="region of interest" description="Disordered" evidence="3">
    <location>
        <begin position="39"/>
        <end position="306"/>
    </location>
</feature>
<feature type="region of interest" description="Disordered" evidence="3">
    <location>
        <begin position="320"/>
        <end position="341"/>
    </location>
</feature>
<feature type="region of interest" description="Disordered" evidence="3">
    <location>
        <begin position="385"/>
        <end position="519"/>
    </location>
</feature>
<feature type="region of interest" description="Disordered" evidence="3">
    <location>
        <begin position="531"/>
        <end position="658"/>
    </location>
</feature>
<feature type="region of interest" description="Disordered" evidence="3">
    <location>
        <begin position="792"/>
        <end position="847"/>
    </location>
</feature>
<feature type="region of interest" description="Disordered" evidence="3">
    <location>
        <begin position="893"/>
        <end position="918"/>
    </location>
</feature>
<feature type="region of interest" description="Disordered" evidence="3">
    <location>
        <begin position="950"/>
        <end position="1080"/>
    </location>
</feature>
<feature type="region of interest" description="Disordered" evidence="3">
    <location>
        <begin position="1177"/>
        <end position="1205"/>
    </location>
</feature>
<feature type="region of interest" description="Disordered" evidence="3">
    <location>
        <begin position="1410"/>
        <end position="1443"/>
    </location>
</feature>
<feature type="region of interest" description="Disordered" evidence="3">
    <location>
        <begin position="1455"/>
        <end position="1486"/>
    </location>
</feature>
<feature type="coiled-coil region" evidence="2">
    <location>
        <begin position="494"/>
        <end position="544"/>
    </location>
</feature>
<feature type="coiled-coil region" evidence="2">
    <location>
        <begin position="880"/>
        <end position="904"/>
    </location>
</feature>
<feature type="compositionally biased region" description="Polar residues" evidence="3">
    <location>
        <begin position="88"/>
        <end position="137"/>
    </location>
</feature>
<feature type="compositionally biased region" description="Polar residues" evidence="3">
    <location>
        <begin position="219"/>
        <end position="235"/>
    </location>
</feature>
<feature type="compositionally biased region" description="Polar residues" evidence="3">
    <location>
        <begin position="288"/>
        <end position="300"/>
    </location>
</feature>
<feature type="compositionally biased region" description="Basic and acidic residues" evidence="3">
    <location>
        <begin position="422"/>
        <end position="433"/>
    </location>
</feature>
<feature type="compositionally biased region" description="Basic and acidic residues" evidence="3">
    <location>
        <begin position="478"/>
        <end position="488"/>
    </location>
</feature>
<feature type="compositionally biased region" description="Basic and acidic residues" evidence="3">
    <location>
        <begin position="501"/>
        <end position="519"/>
    </location>
</feature>
<feature type="compositionally biased region" description="Low complexity" evidence="3">
    <location>
        <begin position="600"/>
        <end position="611"/>
    </location>
</feature>
<feature type="compositionally biased region" description="Low complexity" evidence="3">
    <location>
        <begin position="638"/>
        <end position="656"/>
    </location>
</feature>
<feature type="compositionally biased region" description="Polar residues" evidence="3">
    <location>
        <begin position="960"/>
        <end position="986"/>
    </location>
</feature>
<feature type="compositionally biased region" description="Low complexity" evidence="3">
    <location>
        <begin position="998"/>
        <end position="1007"/>
    </location>
</feature>
<feature type="compositionally biased region" description="Basic and acidic residues" evidence="3">
    <location>
        <begin position="1025"/>
        <end position="1055"/>
    </location>
</feature>
<feature type="compositionally biased region" description="Basic and acidic residues" evidence="3">
    <location>
        <begin position="1062"/>
        <end position="1074"/>
    </location>
</feature>
<feature type="compositionally biased region" description="Polar residues" evidence="3">
    <location>
        <begin position="1181"/>
        <end position="1191"/>
    </location>
</feature>
<feature type="compositionally biased region" description="Low complexity" evidence="3">
    <location>
        <begin position="1410"/>
        <end position="1421"/>
    </location>
</feature>
<feature type="compositionally biased region" description="Polar residues" evidence="3">
    <location>
        <begin position="1457"/>
        <end position="1474"/>
    </location>
</feature>
<feature type="modified residue" description="Phosphoserine" evidence="1">
    <location>
        <position position="166"/>
    </location>
</feature>
<feature type="modified residue" description="Phosphoserine" evidence="1">
    <location>
        <position position="168"/>
    </location>
</feature>
<feature type="modified residue" description="Phosphoserine" evidence="8">
    <location>
        <position position="222"/>
    </location>
</feature>
<feature type="modified residue" description="Phosphoserine" evidence="1">
    <location>
        <position position="226"/>
    </location>
</feature>
<feature type="modified residue" description="Phosphothreonine" evidence="1">
    <location>
        <position position="228"/>
    </location>
</feature>
<feature type="modified residue" description="Phosphoserine" evidence="6 7 8">
    <location>
        <position position="387"/>
    </location>
</feature>
<feature type="modified residue" description="Phosphoserine" evidence="8">
    <location>
        <position position="415"/>
    </location>
</feature>
<feature type="modified residue" description="Phosphoserine" evidence="1">
    <location>
        <position position="479"/>
    </location>
</feature>
<feature type="modified residue" description="Phosphoserine" evidence="1">
    <location>
        <position position="555"/>
    </location>
</feature>
<feature type="modified residue" description="Phosphoserine" evidence="1">
    <location>
        <position position="621"/>
    </location>
</feature>
<feature type="modified residue" description="Phosphothreonine" evidence="1">
    <location>
        <position position="753"/>
    </location>
</feature>
<feature type="modified residue" description="Phosphoserine" evidence="1">
    <location>
        <position position="762"/>
    </location>
</feature>
<feature type="modified residue" description="Phosphoserine" evidence="1">
    <location>
        <position position="793"/>
    </location>
</feature>
<feature type="modified residue" description="Phosphoserine" evidence="1">
    <location>
        <position position="1070"/>
    </location>
</feature>
<feature type="modified residue" description="Phosphoserine" evidence="1">
    <location>
        <position position="1159"/>
    </location>
</feature>
<feature type="cross-link" description="Glycyl lysine isopeptide (Lys-Gly) (interchain with G-Cter in SUMO2)" evidence="1">
    <location>
        <position position="251"/>
    </location>
</feature>
<feature type="cross-link" description="Glycyl lysine isopeptide (Lys-Gly) (interchain with G-Cter in SUMO2)" evidence="1">
    <location>
        <position position="751"/>
    </location>
</feature>
<feature type="splice variant" id="VSP_022764" description="In isoform 2." evidence="4">
    <location>
        <begin position="1"/>
        <end position="766"/>
    </location>
</feature>
<feature type="splice variant" id="VSP_022765" description="In isoform 2." evidence="4">
    <original>QSEWMKNPAWEP</original>
    <variation>PSSASPSGKPSGSAVNMGSVQGHYVQQAKRVDEKPGLGTVKLQEASSATSQMKRTGAIKPRAVKVEGSKA</variation>
    <location>
        <begin position="1475"/>
        <end position="1486"/>
    </location>
</feature>
<feature type="sequence conflict" description="In Ref. 1; BAC35022." evidence="5" ref="1">
    <original>P</original>
    <variation>S</variation>
    <location>
        <position position="1342"/>
    </location>
</feature>
<dbReference type="EMBL" id="AK052511">
    <property type="protein sequence ID" value="BAC35022.1"/>
    <property type="molecule type" value="mRNA"/>
</dbReference>
<dbReference type="EMBL" id="AL808027">
    <property type="status" value="NOT_ANNOTATED_CDS"/>
    <property type="molecule type" value="Genomic_DNA"/>
</dbReference>
<dbReference type="EMBL" id="BC055116">
    <property type="protein sequence ID" value="AAH55116.1"/>
    <property type="molecule type" value="mRNA"/>
</dbReference>
<dbReference type="CCDS" id="CCDS15907.1">
    <molecule id="Q7TPM1-1"/>
</dbReference>
<dbReference type="RefSeq" id="NP_001153106.1">
    <property type="nucleotide sequence ID" value="NM_001159634.1"/>
</dbReference>
<dbReference type="RefSeq" id="NP_766249.2">
    <molecule id="Q7TPM1-1"/>
    <property type="nucleotide sequence ID" value="NM_172661.3"/>
</dbReference>
<dbReference type="SMR" id="Q7TPM1"/>
<dbReference type="BioGRID" id="230675">
    <property type="interactions" value="14"/>
</dbReference>
<dbReference type="FunCoup" id="Q7TPM1">
    <property type="interactions" value="90"/>
</dbReference>
<dbReference type="IntAct" id="Q7TPM1">
    <property type="interactions" value="6"/>
</dbReference>
<dbReference type="MINT" id="Q7TPM1"/>
<dbReference type="GlyGen" id="Q7TPM1">
    <property type="glycosylation" value="6 sites, 1 O-linked glycan (6 sites)"/>
</dbReference>
<dbReference type="iPTMnet" id="Q7TPM1"/>
<dbReference type="PhosphoSitePlus" id="Q7TPM1"/>
<dbReference type="jPOST" id="Q7TPM1"/>
<dbReference type="PaxDb" id="10090-ENSMUSP00000035734"/>
<dbReference type="PeptideAtlas" id="Q7TPM1"/>
<dbReference type="ProteomicsDB" id="291859">
    <molecule id="Q7TPM1-1"/>
</dbReference>
<dbReference type="ProteomicsDB" id="291860">
    <molecule id="Q7TPM1-2"/>
</dbReference>
<dbReference type="Pumba" id="Q7TPM1"/>
<dbReference type="DNASU" id="227723"/>
<dbReference type="Ensembl" id="ENSMUST00000036691.14">
    <molecule id="Q7TPM1-1"/>
    <property type="protein sequence ID" value="ENSMUSP00000035734.8"/>
    <property type="gene ID" value="ENSMUSG00000039262.17"/>
</dbReference>
<dbReference type="GeneID" id="227723"/>
<dbReference type="KEGG" id="mmu:227723"/>
<dbReference type="UCSC" id="uc008jem.2">
    <molecule id="Q7TPM1-1"/>
    <property type="organism name" value="mouse"/>
</dbReference>
<dbReference type="AGR" id="MGI:1923304"/>
<dbReference type="CTD" id="84726"/>
<dbReference type="MGI" id="MGI:1923304">
    <property type="gene designation" value="Prrc2b"/>
</dbReference>
<dbReference type="VEuPathDB" id="HostDB:ENSMUSG00000039262"/>
<dbReference type="eggNOG" id="KOG4817">
    <property type="taxonomic scope" value="Eukaryota"/>
</dbReference>
<dbReference type="GeneTree" id="ENSGT00950000183161"/>
<dbReference type="HOGENOM" id="CLU_001247_0_0_1"/>
<dbReference type="InParanoid" id="Q7TPM1"/>
<dbReference type="OrthoDB" id="1939715at2759"/>
<dbReference type="TreeFam" id="TF328738"/>
<dbReference type="BioGRID-ORCS" id="227723">
    <property type="hits" value="5 hits in 77 CRISPR screens"/>
</dbReference>
<dbReference type="ChiTaRS" id="Prrc2b">
    <property type="organism name" value="mouse"/>
</dbReference>
<dbReference type="PRO" id="PR:Q7TPM1"/>
<dbReference type="Proteomes" id="UP000000589">
    <property type="component" value="Chromosome 2"/>
</dbReference>
<dbReference type="RNAct" id="Q7TPM1">
    <property type="molecule type" value="protein"/>
</dbReference>
<dbReference type="Bgee" id="ENSMUSG00000039262">
    <property type="expression patterns" value="Expressed in superior cervical ganglion and 237 other cell types or tissues"/>
</dbReference>
<dbReference type="ExpressionAtlas" id="Q7TPM1">
    <property type="expression patterns" value="baseline and differential"/>
</dbReference>
<dbReference type="GO" id="GO:0001701">
    <property type="term" value="P:in utero embryonic development"/>
    <property type="evidence" value="ECO:0000315"/>
    <property type="project" value="MGI"/>
</dbReference>
<dbReference type="InterPro" id="IPR009738">
    <property type="entry name" value="BAT2_N"/>
</dbReference>
<dbReference type="InterPro" id="IPR033184">
    <property type="entry name" value="PRRC2"/>
</dbReference>
<dbReference type="PANTHER" id="PTHR14038">
    <property type="entry name" value="BAT2 HLA-B-ASSOCIATED TRANSCRIPT 2"/>
    <property type="match status" value="1"/>
</dbReference>
<dbReference type="PANTHER" id="PTHR14038:SF4">
    <property type="entry name" value="PROTEIN PRRC2B"/>
    <property type="match status" value="1"/>
</dbReference>
<dbReference type="Pfam" id="PF07001">
    <property type="entry name" value="BAT2_N"/>
    <property type="match status" value="1"/>
</dbReference>
<protein>
    <recommendedName>
        <fullName>Protein PRRC2B</fullName>
    </recommendedName>
    <alternativeName>
        <fullName>HLA-B-associated transcript 2-like 1</fullName>
    </alternativeName>
    <alternativeName>
        <fullName>Proline-rich coiled-coil protein 2B</fullName>
    </alternativeName>
</protein>
<keyword id="KW-0025">Alternative splicing</keyword>
<keyword id="KW-0175">Coiled coil</keyword>
<keyword id="KW-1017">Isopeptide bond</keyword>
<keyword id="KW-0597">Phosphoprotein</keyword>
<keyword id="KW-1185">Reference proteome</keyword>
<keyword id="KW-0832">Ubl conjugation</keyword>
<sequence>MSDRLGQITQGKDGKSKYSTLSLFDKYKGRSVGAVRSSVIPRHGLQSLGKVATARRMPPPANLPSLKSENKGNDPNIVIVPKDGTGWANKQDQQDPKSSSVTASQPPESQPQPGLQKSVSNLQKPTQSISQENTNSVPGGPKSWAQLSGKPVGHEGGLRGSSRLLSFSPEEFPTLKAAGGQDKAGKEKGALDLSYGPGPSLRPQNVTSWREGGGRNIISAASLSASPTELGSRNASGADGAPSLACTSDSKEPSLRPAQPSRRGASQFMGHGYQPPTYHDMLPAFMCSPQSSENQTTVERSSFPLPQLRLEPRVPFRQFQMNDQDGKERPGVARPVRPLRQLVERAPRPTIINAENLKGLDDLDTDADDGWAGLHEEVDYSEKLKFSDDEDEEDVVKDGRSKWNNWDPRRQRALSLSSADSTDAKRTQEEGKDWSGTAGGSRVIRKVPEPQPPSRKLHSWASGPDYQKPTMGSMFRQHSAEDKEDKPPPRQKFIQSEMSEAVERARKRREEEERRAREERLAACAAKLKQLDQKCRQAQKANETPKPVEKEVPRSPGIEKVSPPENGPVVRKGSPEFPVQEAPTMFLEETPATSPTVAQSNSSSSSSSSSSIEEEVRESGSPAQEFSKYQKSLPPRFQRQQQQQQQQQQQQQQQEQLYKMQHWQPVYPPPSHPQRTFYPHHPQMLGFDPRWMMMPSYMDPRITPTRTPVDFYPSALHPSGLMKPMMPQESLSGTGCRSEDQNCVPSLQERKVTALDPAPVWSPEGYMALQNKGYSLPHPKSADTLAMGMHVRSPDEALPGGLGSHSPYALERTTHASSDGPETPSKKSEREVSLPTQRASEQEEARKQFDLGYGNALIDNCASSPGEENEASSVVGEGFIEVLTKKQRRLLEEERRKKEQAAQVPVKGRGLSSRIPPRFAKKQNGLCLEQDVTVPGSSLGTEIWENSSQALPVQGAASDSWRTAVTAFSSTEPGTSEQGFKSSQGDSGVDLSAESRESSATSSQRSSPYGTLKPEEISGPGLAESKADSHKDQAQKQAEHKDSEQGSAQSKEHRPGPIGNERSLKNRKGSEGAERLPGAVVPPVNGVEIHVDSVLPVPPIEFGVSPKDSDFSLPPGSVSGPVGNPVAKLQDVLASNAGLTQSIPILRRDHHMQRAIGLSPMSFPTADLTLKMESARKAWENSPSLPEQSSPGGAGSGIQPPSSVGASNGVNYSSFGGVSMPPMPVASVAPSASIPGSHLPPLYLDGHVFASQPRLVPQTIPQQQSYQQAATAQQIPISLHTSLQAQAQLGLRGGLPVSQSQEIFSSLQPFRSQVYMHPSLSPPSTMILSGGTALKPPYSAFPGIQPLEMVKPQSGSPYQPMSGNQALVYEGQLGQAAGLGTSQMLDSQLPQLTMPLPRYGSGQQPLILPQSIQLPPGQSLSVGAPRRVPPPGSQPPVLNTSRESAPMELKGFHFADSKQNVPTGGSAPSPQAYRQSEWMKNPAWEP</sequence>
<name>PRC2B_MOUSE</name>
<evidence type="ECO:0000250" key="1">
    <source>
        <dbReference type="UniProtKB" id="Q5JSZ5"/>
    </source>
</evidence>
<evidence type="ECO:0000255" key="2"/>
<evidence type="ECO:0000256" key="3">
    <source>
        <dbReference type="SAM" id="MobiDB-lite"/>
    </source>
</evidence>
<evidence type="ECO:0000303" key="4">
    <source>
    </source>
</evidence>
<evidence type="ECO:0000305" key="5"/>
<evidence type="ECO:0007744" key="6">
    <source>
    </source>
</evidence>
<evidence type="ECO:0007744" key="7">
    <source>
    </source>
</evidence>
<evidence type="ECO:0007744" key="8">
    <source>
    </source>
</evidence>
<proteinExistence type="evidence at protein level"/>
<accession>Q7TPM1</accession>
<accession>A2AN31</accession>
<accession>Q8C755</accession>